<comment type="function">
    <text>Nuclear hormone receptor that can act as a repressor or activator of transcription. High affinity receptor for thyroid hormones, including triiodothyronine and thyroxine.</text>
</comment>
<comment type="subunit">
    <text evidence="1 6">Binds DNA as a dimer; homodimer and heterodimer with RXRA (By similarity). Interacts with the coactivators NCOA1/SRC1, NCOA2/GRIP1, NCOA7 and MED1/TRAP220 in a ligand-inducible manner (By similarity). Interacts with the corepressor NCOR1 in absence of ligand. Interacts with C1D (By similarity). Interacts with NR2F6; the interaction impairs the binding of the THRB homodimer and THRB:RXRB heterodimer to T3 response elements (By similarity). Interacts with PRMT2 and THRSP (By similarity). Interacts with TACC1; this interaction is decreased in the presence of thyroid hormone T3 (PubMed:20078863).</text>
</comment>
<comment type="subcellular location">
    <subcellularLocation>
        <location>Nucleus</location>
    </subcellularLocation>
</comment>
<comment type="alternative products">
    <event type="alternative splicing"/>
    <isoform>
        <id>P18113-1</id>
        <name>Beta-1</name>
        <sequence type="displayed"/>
    </isoform>
    <isoform>
        <id>P18113-2</id>
        <id>P37826-1</id>
        <name>Beta-2</name>
        <sequence type="described" ref="VSP_031079"/>
    </isoform>
</comment>
<comment type="domain">
    <text>Composed of three domains: a modulating N-terminal domain, a DNA-binding domain and a C-terminal ligand-binding domain.</text>
</comment>
<comment type="similarity">
    <text evidence="8">Belongs to the nuclear hormone receptor family. NR1 subfamily.</text>
</comment>
<comment type="sequence caution" evidence="8">
    <conflict type="erroneous initiation">
        <sequence resource="EMBL-CDS" id="AAA40916"/>
    </conflict>
    <text>Truncated N-terminus.</text>
</comment>
<comment type="sequence caution" evidence="8">
    <conflict type="erroneous initiation">
        <sequence resource="EMBL-CDS" id="AAA42200"/>
    </conflict>
    <text>Extended N-terminus.</text>
</comment>
<reference key="1">
    <citation type="journal article" date="1988" name="J. Biol. Chem.">
        <title>Isolation and characterization of rat cDNA clones for two distinct thyroid hormone receptors.</title>
        <authorList>
            <person name="Murray M.B."/>
            <person name="Zilz N.D."/>
            <person name="McCreary N.L."/>
            <person name="Macdonald M.J."/>
            <person name="Towle H.C."/>
        </authorList>
    </citation>
    <scope>NUCLEOTIDE SEQUENCE [MRNA] (ISOFORM BETA-1)</scope>
    <source>
        <tissue>Liver</tissue>
    </source>
</reference>
<reference key="2">
    <citation type="journal article" date="1988" name="Proc. Natl. Acad. Sci. U.S.A.">
        <title>Isolation of a cDNA clone encoding a biologically active thyroid hormone receptor.</title>
        <authorList>
            <person name="Koenig R.J."/>
            <person name="Warne R.L."/>
            <person name="Brent G.A."/>
            <person name="Harney J.W."/>
            <person name="Larsen P.R."/>
            <person name="Moore D.D."/>
        </authorList>
    </citation>
    <scope>NUCLEOTIDE SEQUENCE [MRNA] (ISOFORM BETA-1)</scope>
    <source>
        <tissue>Pituitary</tissue>
    </source>
</reference>
<reference key="3">
    <citation type="journal article" date="1989" name="Science">
        <title>Identification of a thyroid hormone receptor that is pituitary-specific.</title>
        <authorList>
            <person name="Hodin R.A."/>
            <person name="Lazar M.A."/>
            <person name="Wintman B.I."/>
            <person name="Darling D.S."/>
            <person name="Koenig R.J."/>
            <person name="Larsen P.R."/>
            <person name="Moore D.D."/>
            <person name="Chin W.W."/>
        </authorList>
    </citation>
    <scope>NUCLEOTIDE SEQUENCE [MRNA] OF 1-121 (ISOFORM BETA-2)</scope>
    <source>
        <tissue>Pituitary</tissue>
    </source>
</reference>
<reference key="4">
    <citation type="journal article" date="2010" name="BMC Mol. Biol.">
        <title>The transforming acidic coiled coil (TACC1) protein modulates the transcriptional activity of the nuclear receptors TR and RAR.</title>
        <authorList>
            <person name="Guyot R."/>
            <person name="Vincent S."/>
            <person name="Bertin J."/>
            <person name="Samarut J."/>
            <person name="Ravel-Chapuis P."/>
        </authorList>
    </citation>
    <scope>INTERACTION WITH TACC1</scope>
</reference>
<reference key="5">
    <citation type="journal article" date="2010" name="Mol. Endocrinol.">
        <title>Structure of a thyroid hormone receptor DNA-binding domain homodimer bound to an inverted palindrome DNA response element.</title>
        <authorList>
            <person name="Chen Y."/>
            <person name="Young M.A."/>
        </authorList>
    </citation>
    <scope>X-RAY CRYSTALLOGRAPHY (2.41 ANGSTROMS) OF 104-206</scope>
    <scope>SUBUNIT</scope>
</reference>
<dbReference type="EMBL" id="J03933">
    <property type="protein sequence ID" value="AAA40916.1"/>
    <property type="status" value="ALT_INIT"/>
    <property type="molecule type" value="mRNA"/>
</dbReference>
<dbReference type="EMBL" id="J03819">
    <property type="protein sequence ID" value="AAA60743.1"/>
    <property type="molecule type" value="mRNA"/>
</dbReference>
<dbReference type="EMBL" id="M25071">
    <property type="protein sequence ID" value="AAA42200.1"/>
    <property type="status" value="ALT_INIT"/>
    <property type="molecule type" value="mRNA"/>
</dbReference>
<dbReference type="PIR" id="A31820">
    <property type="entry name" value="A31820"/>
</dbReference>
<dbReference type="PIR" id="A41355">
    <property type="entry name" value="A41355"/>
</dbReference>
<dbReference type="PDB" id="3M9E">
    <property type="method" value="X-ray"/>
    <property type="resolution" value="2.41 A"/>
    <property type="chains" value="A/B/E/F=104-206"/>
</dbReference>
<dbReference type="PDBsum" id="3M9E"/>
<dbReference type="SMR" id="P18113"/>
<dbReference type="CORUM" id="P18113"/>
<dbReference type="DIP" id="DIP-61264N"/>
<dbReference type="FunCoup" id="P18113">
    <property type="interactions" value="1283"/>
</dbReference>
<dbReference type="IntAct" id="P18113">
    <property type="interactions" value="2"/>
</dbReference>
<dbReference type="STRING" id="10116.ENSRNOP00000073083"/>
<dbReference type="BindingDB" id="P18113"/>
<dbReference type="ChEMBL" id="CHEMBL3917"/>
<dbReference type="DrugCentral" id="P18113"/>
<dbReference type="PhosphoSitePlus" id="P18113"/>
<dbReference type="PaxDb" id="10116-ENSRNOP00000008752"/>
<dbReference type="ABCD" id="P18113">
    <property type="antibodies" value="3 sequenced antibodies"/>
</dbReference>
<dbReference type="UCSC" id="RGD:3858">
    <molecule id="P18113-1"/>
    <property type="organism name" value="rat"/>
</dbReference>
<dbReference type="AGR" id="RGD:3858"/>
<dbReference type="RGD" id="3858">
    <property type="gene designation" value="Thrb"/>
</dbReference>
<dbReference type="eggNOG" id="KOG3575">
    <property type="taxonomic scope" value="Eukaryota"/>
</dbReference>
<dbReference type="InParanoid" id="P18113"/>
<dbReference type="PhylomeDB" id="P18113"/>
<dbReference type="Reactome" id="R-RNO-383280">
    <property type="pathway name" value="Nuclear Receptor transcription pathway"/>
</dbReference>
<dbReference type="Reactome" id="R-RNO-4090294">
    <property type="pathway name" value="SUMOylation of intracellular receptors"/>
</dbReference>
<dbReference type="EvolutionaryTrace" id="P18113"/>
<dbReference type="PRO" id="PR:P18113"/>
<dbReference type="Proteomes" id="UP000002494">
    <property type="component" value="Unplaced"/>
</dbReference>
<dbReference type="GO" id="GO:0005634">
    <property type="term" value="C:nucleus"/>
    <property type="evidence" value="ECO:0000266"/>
    <property type="project" value="RGD"/>
</dbReference>
<dbReference type="GO" id="GO:0090575">
    <property type="term" value="C:RNA polymerase II transcription regulator complex"/>
    <property type="evidence" value="ECO:0000266"/>
    <property type="project" value="RGD"/>
</dbReference>
<dbReference type="GO" id="GO:0003682">
    <property type="term" value="F:chromatin binding"/>
    <property type="evidence" value="ECO:0000266"/>
    <property type="project" value="RGD"/>
</dbReference>
<dbReference type="GO" id="GO:0031490">
    <property type="term" value="F:chromatin DNA binding"/>
    <property type="evidence" value="ECO:0000266"/>
    <property type="project" value="RGD"/>
</dbReference>
<dbReference type="GO" id="GO:0003690">
    <property type="term" value="F:double-stranded DNA binding"/>
    <property type="evidence" value="ECO:0000314"/>
    <property type="project" value="RGD"/>
</dbReference>
<dbReference type="GO" id="GO:0019899">
    <property type="term" value="F:enzyme binding"/>
    <property type="evidence" value="ECO:0000266"/>
    <property type="project" value="RGD"/>
</dbReference>
<dbReference type="GO" id="GO:0042802">
    <property type="term" value="F:identical protein binding"/>
    <property type="evidence" value="ECO:0000353"/>
    <property type="project" value="RGD"/>
</dbReference>
<dbReference type="GO" id="GO:0004879">
    <property type="term" value="F:nuclear receptor activity"/>
    <property type="evidence" value="ECO:0000314"/>
    <property type="project" value="RGD"/>
</dbReference>
<dbReference type="GO" id="GO:0000978">
    <property type="term" value="F:RNA polymerase II cis-regulatory region sequence-specific DNA binding"/>
    <property type="evidence" value="ECO:0000318"/>
    <property type="project" value="GO_Central"/>
</dbReference>
<dbReference type="GO" id="GO:1990837">
    <property type="term" value="F:sequence-specific double-stranded DNA binding"/>
    <property type="evidence" value="ECO:0000266"/>
    <property type="project" value="RGD"/>
</dbReference>
<dbReference type="GO" id="GO:0070324">
    <property type="term" value="F:thyroid hormone binding"/>
    <property type="evidence" value="ECO:0000250"/>
    <property type="project" value="UniProtKB"/>
</dbReference>
<dbReference type="GO" id="GO:0001223">
    <property type="term" value="F:transcription coactivator binding"/>
    <property type="evidence" value="ECO:0000266"/>
    <property type="project" value="RGD"/>
</dbReference>
<dbReference type="GO" id="GO:0008270">
    <property type="term" value="F:zinc ion binding"/>
    <property type="evidence" value="ECO:0007669"/>
    <property type="project" value="UniProtKB-KW"/>
</dbReference>
<dbReference type="GO" id="GO:0009887">
    <property type="term" value="P:animal organ morphogenesis"/>
    <property type="evidence" value="ECO:0000266"/>
    <property type="project" value="RGD"/>
</dbReference>
<dbReference type="GO" id="GO:0030154">
    <property type="term" value="P:cell differentiation"/>
    <property type="evidence" value="ECO:0000318"/>
    <property type="project" value="GO_Central"/>
</dbReference>
<dbReference type="GO" id="GO:0097067">
    <property type="term" value="P:cellular response to thyroid hormone stimulus"/>
    <property type="evidence" value="ECO:0000266"/>
    <property type="project" value="RGD"/>
</dbReference>
<dbReference type="GO" id="GO:0048568">
    <property type="term" value="P:embryonic organ development"/>
    <property type="evidence" value="ECO:0000270"/>
    <property type="project" value="RGD"/>
</dbReference>
<dbReference type="GO" id="GO:0008050">
    <property type="term" value="P:female courtship behavior"/>
    <property type="evidence" value="ECO:0000266"/>
    <property type="project" value="RGD"/>
</dbReference>
<dbReference type="GO" id="GO:0042789">
    <property type="term" value="P:mRNA transcription by RNA polymerase II"/>
    <property type="evidence" value="ECO:0000266"/>
    <property type="project" value="RGD"/>
</dbReference>
<dbReference type="GO" id="GO:0045892">
    <property type="term" value="P:negative regulation of DNA-templated transcription"/>
    <property type="evidence" value="ECO:0000266"/>
    <property type="project" value="RGD"/>
</dbReference>
<dbReference type="GO" id="GO:0007621">
    <property type="term" value="P:negative regulation of female receptivity"/>
    <property type="evidence" value="ECO:0000266"/>
    <property type="project" value="RGD"/>
</dbReference>
<dbReference type="GO" id="GO:0000122">
    <property type="term" value="P:negative regulation of transcription by RNA polymerase II"/>
    <property type="evidence" value="ECO:0000266"/>
    <property type="project" value="RGD"/>
</dbReference>
<dbReference type="GO" id="GO:0008284">
    <property type="term" value="P:positive regulation of cell population proliferation"/>
    <property type="evidence" value="ECO:0000315"/>
    <property type="project" value="RGD"/>
</dbReference>
<dbReference type="GO" id="GO:0032332">
    <property type="term" value="P:positive regulation of chondrocyte differentiation"/>
    <property type="evidence" value="ECO:0000314"/>
    <property type="project" value="RGD"/>
</dbReference>
<dbReference type="GO" id="GO:0045778">
    <property type="term" value="P:positive regulation of ossification"/>
    <property type="evidence" value="ECO:0000314"/>
    <property type="project" value="RGD"/>
</dbReference>
<dbReference type="GO" id="GO:0002157">
    <property type="term" value="P:positive regulation of thyroid hormone receptor signaling pathway"/>
    <property type="evidence" value="ECO:0000266"/>
    <property type="project" value="RGD"/>
</dbReference>
<dbReference type="GO" id="GO:0045944">
    <property type="term" value="P:positive regulation of transcription by RNA polymerase II"/>
    <property type="evidence" value="ECO:0000266"/>
    <property type="project" value="RGD"/>
</dbReference>
<dbReference type="GO" id="GO:0090181">
    <property type="term" value="P:regulation of cholesterol metabolic process"/>
    <property type="evidence" value="ECO:0000315"/>
    <property type="project" value="RGD"/>
</dbReference>
<dbReference type="GO" id="GO:0008016">
    <property type="term" value="P:regulation of heart contraction"/>
    <property type="evidence" value="ECO:0000266"/>
    <property type="project" value="RGD"/>
</dbReference>
<dbReference type="GO" id="GO:0019216">
    <property type="term" value="P:regulation of lipid metabolic process"/>
    <property type="evidence" value="ECO:0000314"/>
    <property type="project" value="RGD"/>
</dbReference>
<dbReference type="GO" id="GO:0006357">
    <property type="term" value="P:regulation of transcription by RNA polymerase II"/>
    <property type="evidence" value="ECO:0000266"/>
    <property type="project" value="RGD"/>
</dbReference>
<dbReference type="GO" id="GO:0090207">
    <property type="term" value="P:regulation of triglyceride metabolic process"/>
    <property type="evidence" value="ECO:0000315"/>
    <property type="project" value="RGD"/>
</dbReference>
<dbReference type="GO" id="GO:0097474">
    <property type="term" value="P:retinal cone cell apoptotic process"/>
    <property type="evidence" value="ECO:0000266"/>
    <property type="project" value="RGD"/>
</dbReference>
<dbReference type="GO" id="GO:0046549">
    <property type="term" value="P:retinal cone cell development"/>
    <property type="evidence" value="ECO:0000266"/>
    <property type="project" value="RGD"/>
</dbReference>
<dbReference type="GO" id="GO:0048384">
    <property type="term" value="P:retinoic acid receptor signaling pathway"/>
    <property type="evidence" value="ECO:0000318"/>
    <property type="project" value="GO_Central"/>
</dbReference>
<dbReference type="GO" id="GO:0007605">
    <property type="term" value="P:sensory perception of sound"/>
    <property type="evidence" value="ECO:0000266"/>
    <property type="project" value="RGD"/>
</dbReference>
<dbReference type="GO" id="GO:0002154">
    <property type="term" value="P:thyroid hormone receptor signaling pathway"/>
    <property type="evidence" value="ECO:0000318"/>
    <property type="project" value="GO_Central"/>
</dbReference>
<dbReference type="GO" id="GO:0060509">
    <property type="term" value="P:type I pneumocyte differentiation"/>
    <property type="evidence" value="ECO:0000266"/>
    <property type="project" value="RGD"/>
</dbReference>
<dbReference type="CDD" id="cd06961">
    <property type="entry name" value="NR_DBD_TR"/>
    <property type="match status" value="1"/>
</dbReference>
<dbReference type="CDD" id="cd06935">
    <property type="entry name" value="NR_LBD_TR"/>
    <property type="match status" value="1"/>
</dbReference>
<dbReference type="FunFam" id="1.10.565.10:FF:000006">
    <property type="entry name" value="Thyroid hormone receptor beta 2"/>
    <property type="match status" value="1"/>
</dbReference>
<dbReference type="FunFam" id="3.30.50.10:FF:000011">
    <property type="entry name" value="Thyroid hormone receptor beta isoform"/>
    <property type="match status" value="1"/>
</dbReference>
<dbReference type="Gene3D" id="3.30.50.10">
    <property type="entry name" value="Erythroid Transcription Factor GATA-1, subunit A"/>
    <property type="match status" value="1"/>
</dbReference>
<dbReference type="Gene3D" id="1.10.565.10">
    <property type="entry name" value="Retinoid X Receptor"/>
    <property type="match status" value="1"/>
</dbReference>
<dbReference type="InterPro" id="IPR035500">
    <property type="entry name" value="NHR-like_dom_sf"/>
</dbReference>
<dbReference type="InterPro" id="IPR000536">
    <property type="entry name" value="Nucl_hrmn_rcpt_lig-bd"/>
</dbReference>
<dbReference type="InterPro" id="IPR050234">
    <property type="entry name" value="Nuclear_hormone_rcpt_NR1"/>
</dbReference>
<dbReference type="InterPro" id="IPR001723">
    <property type="entry name" value="Nuclear_hrmn_rcpt"/>
</dbReference>
<dbReference type="InterPro" id="IPR001728">
    <property type="entry name" value="ThyrH_rcpt"/>
</dbReference>
<dbReference type="InterPro" id="IPR001628">
    <property type="entry name" value="Znf_hrmn_rcpt"/>
</dbReference>
<dbReference type="InterPro" id="IPR013088">
    <property type="entry name" value="Znf_NHR/GATA"/>
</dbReference>
<dbReference type="PANTHER" id="PTHR24082">
    <property type="entry name" value="NUCLEAR HORMONE RECEPTOR"/>
    <property type="match status" value="1"/>
</dbReference>
<dbReference type="PANTHER" id="PTHR24082:SF210">
    <property type="entry name" value="THYROID HORMONE RECEPTOR BETA"/>
    <property type="match status" value="1"/>
</dbReference>
<dbReference type="Pfam" id="PF00104">
    <property type="entry name" value="Hormone_recep"/>
    <property type="match status" value="1"/>
</dbReference>
<dbReference type="Pfam" id="PF00105">
    <property type="entry name" value="zf-C4"/>
    <property type="match status" value="1"/>
</dbReference>
<dbReference type="PRINTS" id="PR00398">
    <property type="entry name" value="STRDHORMONER"/>
</dbReference>
<dbReference type="PRINTS" id="PR00047">
    <property type="entry name" value="STROIDFINGER"/>
</dbReference>
<dbReference type="PRINTS" id="PR00546">
    <property type="entry name" value="THYROIDHORMR"/>
</dbReference>
<dbReference type="SMART" id="SM00430">
    <property type="entry name" value="HOLI"/>
    <property type="match status" value="1"/>
</dbReference>
<dbReference type="SMART" id="SM00399">
    <property type="entry name" value="ZnF_C4"/>
    <property type="match status" value="1"/>
</dbReference>
<dbReference type="SUPFAM" id="SSF57716">
    <property type="entry name" value="Glucocorticoid receptor-like (DNA-binding domain)"/>
    <property type="match status" value="1"/>
</dbReference>
<dbReference type="SUPFAM" id="SSF48508">
    <property type="entry name" value="Nuclear receptor ligand-binding domain"/>
    <property type="match status" value="1"/>
</dbReference>
<dbReference type="PROSITE" id="PS51843">
    <property type="entry name" value="NR_LBD"/>
    <property type="match status" value="1"/>
</dbReference>
<dbReference type="PROSITE" id="PS00031">
    <property type="entry name" value="NUCLEAR_REC_DBD_1"/>
    <property type="match status" value="1"/>
</dbReference>
<dbReference type="PROSITE" id="PS51030">
    <property type="entry name" value="NUCLEAR_REC_DBD_2"/>
    <property type="match status" value="1"/>
</dbReference>
<sequence>MTPNSMTENRLPAWDKQKPHPDRGQDWKLVGMSEACLHRKSHVERRGALKNEQTSSHLIQATWASSIFHLDPDDVNDQSVSSAQTFQTEEKKCKGYIPSYLDKDELCVVCGDKATGYHYRCITCEGCKGFFRRTIQKSLHPSYSCKYEGKCIIDKVTRNQCQECRFKKCIYVGMATDLVLDDSKRLAKRKLIEENREKRRREELQKSIGHKPEPTDEEWELIKTVTEAHVATNAQGSHWKQKRKFLPEDIGQAPIVNAPEGGQVDLEAFSHFTKIITPAITRVVDFAKKLPMFCELPCEDQIILLKGCCMEIMSLRAAVRYDPDSETLTLNGEMAVTRGQLKNGGLGVVSDAIFDLGMSLSSFNLDDTEVALLQAVLLMSSDRPGLACVERIEKYQDSFLLAFEHYINYRKHHVTHFWPKLLMKVTDLRMIGACHASRFLHMKVECPTELFPPLFLEVFED</sequence>
<name>THB_RAT</name>
<protein>
    <recommendedName>
        <fullName>Thyroid hormone receptor beta</fullName>
    </recommendedName>
    <alternativeName>
        <fullName>Nuclear receptor subfamily 1 group A member 2</fullName>
    </alternativeName>
    <alternativeName>
        <fullName>c-erbA-2</fullName>
    </alternativeName>
    <alternativeName>
        <fullName>c-erbA-beta</fullName>
    </alternativeName>
</protein>
<organism>
    <name type="scientific">Rattus norvegicus</name>
    <name type="common">Rat</name>
    <dbReference type="NCBI Taxonomy" id="10116"/>
    <lineage>
        <taxon>Eukaryota</taxon>
        <taxon>Metazoa</taxon>
        <taxon>Chordata</taxon>
        <taxon>Craniata</taxon>
        <taxon>Vertebrata</taxon>
        <taxon>Euteleostomi</taxon>
        <taxon>Mammalia</taxon>
        <taxon>Eutheria</taxon>
        <taxon>Euarchontoglires</taxon>
        <taxon>Glires</taxon>
        <taxon>Rodentia</taxon>
        <taxon>Myomorpha</taxon>
        <taxon>Muroidea</taxon>
        <taxon>Muridae</taxon>
        <taxon>Murinae</taxon>
        <taxon>Rattus</taxon>
    </lineage>
</organism>
<feature type="chain" id="PRO_0000053450" description="Thyroid hormone receptor beta">
    <location>
        <begin position="1"/>
        <end position="461"/>
    </location>
</feature>
<feature type="domain" description="NR LBD" evidence="4">
    <location>
        <begin position="217"/>
        <end position="461"/>
    </location>
</feature>
<feature type="DNA-binding region" description="Nuclear receptor" evidence="3">
    <location>
        <begin position="107"/>
        <end position="181"/>
    </location>
</feature>
<feature type="zinc finger region" description="NR C4-type" evidence="3">
    <location>
        <begin position="107"/>
        <end position="127"/>
    </location>
</feature>
<feature type="zinc finger region" description="NR C4-type" evidence="3">
    <location>
        <begin position="145"/>
        <end position="169"/>
    </location>
</feature>
<feature type="region of interest" description="Modulating">
    <location>
        <begin position="1"/>
        <end position="106"/>
    </location>
</feature>
<feature type="region of interest" description="Disordered" evidence="5">
    <location>
        <begin position="1"/>
        <end position="24"/>
    </location>
</feature>
<feature type="region of interest" description="Interaction with NR2F6" evidence="1">
    <location>
        <begin position="244"/>
        <end position="461"/>
    </location>
</feature>
<feature type="compositionally biased region" description="Basic and acidic residues" evidence="5">
    <location>
        <begin position="13"/>
        <end position="24"/>
    </location>
</feature>
<feature type="binding site" evidence="2">
    <location>
        <position position="107"/>
    </location>
    <ligand>
        <name>Zn(2+)</name>
        <dbReference type="ChEBI" id="CHEBI:29105"/>
        <label>1</label>
    </ligand>
</feature>
<feature type="binding site" evidence="2">
    <location>
        <position position="110"/>
    </location>
    <ligand>
        <name>Zn(2+)</name>
        <dbReference type="ChEBI" id="CHEBI:29105"/>
        <label>1</label>
    </ligand>
</feature>
<feature type="binding site" evidence="2">
    <location>
        <position position="124"/>
    </location>
    <ligand>
        <name>Zn(2+)</name>
        <dbReference type="ChEBI" id="CHEBI:29105"/>
        <label>1</label>
    </ligand>
</feature>
<feature type="binding site" evidence="2">
    <location>
        <position position="127"/>
    </location>
    <ligand>
        <name>Zn(2+)</name>
        <dbReference type="ChEBI" id="CHEBI:29105"/>
        <label>1</label>
    </ligand>
</feature>
<feature type="binding site" evidence="2">
    <location>
        <position position="145"/>
    </location>
    <ligand>
        <name>Zn(2+)</name>
        <dbReference type="ChEBI" id="CHEBI:29105"/>
        <label>2</label>
    </ligand>
</feature>
<feature type="binding site" evidence="2">
    <location>
        <position position="151"/>
    </location>
    <ligand>
        <name>Zn(2+)</name>
        <dbReference type="ChEBI" id="CHEBI:29105"/>
        <label>2</label>
    </ligand>
</feature>
<feature type="binding site" evidence="2">
    <location>
        <position position="161"/>
    </location>
    <ligand>
        <name>Zn(2+)</name>
        <dbReference type="ChEBI" id="CHEBI:29105"/>
        <label>2</label>
    </ligand>
</feature>
<feature type="binding site" evidence="2">
    <location>
        <position position="164"/>
    </location>
    <ligand>
        <name>Zn(2+)</name>
        <dbReference type="ChEBI" id="CHEBI:29105"/>
        <label>2</label>
    </ligand>
</feature>
<feature type="binding site" evidence="2">
    <location>
        <position position="282"/>
    </location>
    <ligand>
        <name>3,3',5-triiodo-L-thyronine</name>
        <dbReference type="ChEBI" id="CHEBI:533015"/>
    </ligand>
</feature>
<feature type="binding site" evidence="2">
    <location>
        <position position="282"/>
    </location>
    <ligand>
        <name>L-thyroxine</name>
        <dbReference type="ChEBI" id="CHEBI:58448"/>
    </ligand>
</feature>
<feature type="binding site" evidence="2">
    <location>
        <position position="331"/>
    </location>
    <ligand>
        <name>3,3',5-triiodo-L-thyronine</name>
        <dbReference type="ChEBI" id="CHEBI:533015"/>
    </ligand>
</feature>
<feature type="binding site" evidence="2">
    <location>
        <position position="331"/>
    </location>
    <ligand>
        <name>L-thyroxine</name>
        <dbReference type="ChEBI" id="CHEBI:58448"/>
    </ligand>
</feature>
<feature type="binding site" evidence="2">
    <location>
        <position position="435"/>
    </location>
    <ligand>
        <name>3,3',5-triiodo-L-thyronine</name>
        <dbReference type="ChEBI" id="CHEBI:533015"/>
        <label>1</label>
    </ligand>
</feature>
<feature type="binding site" evidence="2">
    <location>
        <position position="435"/>
    </location>
    <ligand>
        <name>L-thyroxine</name>
        <dbReference type="ChEBI" id="CHEBI:58448"/>
    </ligand>
</feature>
<feature type="splice variant" id="VSP_031079" description="In isoform Beta-2." evidence="7">
    <original>MTPNSMTENRLPAWDKQKPHPDRGQDWKLVGMSEACLHRKSHVERRGALKNEQTSSHLIQATWASSIFHLDPDDVNDQSVSSAQTFQTEEKKC</original>
    <variation>MNYCVPEVHEVCPAAGSNRYMQVTDYLAYLEDSPAYSGCDVQAVPGSSIYLEQAWTLNQPYTCSYPGNLFKSKDSDLDMALSQYSQPAHLPEEKPFPQVRSPPHSHK</variation>
    <location>
        <begin position="1"/>
        <end position="93"/>
    </location>
</feature>
<feature type="sequence conflict" description="In Ref. 2; AAA60743." evidence="8" ref="2">
    <original>NR</original>
    <variation>KC</variation>
    <location>
        <begin position="9"/>
        <end position="10"/>
    </location>
</feature>
<feature type="sequence conflict" description="In Ref. 2; AAA60743." evidence="8" ref="2">
    <original>Q</original>
    <variation>K</variation>
    <location>
        <position position="263"/>
    </location>
</feature>
<feature type="turn" evidence="9">
    <location>
        <begin position="108"/>
        <end position="110"/>
    </location>
</feature>
<feature type="strand" evidence="9">
    <location>
        <begin position="116"/>
        <end position="122"/>
    </location>
</feature>
<feature type="helix" evidence="9">
    <location>
        <begin position="125"/>
        <end position="136"/>
    </location>
</feature>
<feature type="helix" evidence="9">
    <location>
        <begin position="140"/>
        <end position="142"/>
    </location>
</feature>
<feature type="turn" evidence="9">
    <location>
        <begin position="155"/>
        <end position="159"/>
    </location>
</feature>
<feature type="helix" evidence="9">
    <location>
        <begin position="162"/>
        <end position="171"/>
    </location>
</feature>
<feature type="helix" evidence="9">
    <location>
        <begin position="176"/>
        <end position="178"/>
    </location>
</feature>
<feature type="helix" evidence="9">
    <location>
        <begin position="182"/>
        <end position="202"/>
    </location>
</feature>
<keyword id="KW-0002">3D-structure</keyword>
<keyword id="KW-0025">Alternative splicing</keyword>
<keyword id="KW-0238">DNA-binding</keyword>
<keyword id="KW-0479">Metal-binding</keyword>
<keyword id="KW-0539">Nucleus</keyword>
<keyword id="KW-0675">Receptor</keyword>
<keyword id="KW-1185">Reference proteome</keyword>
<keyword id="KW-0804">Transcription</keyword>
<keyword id="KW-0805">Transcription regulation</keyword>
<keyword id="KW-0862">Zinc</keyword>
<keyword id="KW-0863">Zinc-finger</keyword>
<evidence type="ECO:0000250" key="1"/>
<evidence type="ECO:0000250" key="2">
    <source>
        <dbReference type="UniProtKB" id="P10828"/>
    </source>
</evidence>
<evidence type="ECO:0000255" key="3">
    <source>
        <dbReference type="PROSITE-ProRule" id="PRU00407"/>
    </source>
</evidence>
<evidence type="ECO:0000255" key="4">
    <source>
        <dbReference type="PROSITE-ProRule" id="PRU01189"/>
    </source>
</evidence>
<evidence type="ECO:0000256" key="5">
    <source>
        <dbReference type="SAM" id="MobiDB-lite"/>
    </source>
</evidence>
<evidence type="ECO:0000269" key="6">
    <source>
    </source>
</evidence>
<evidence type="ECO:0000303" key="7">
    <source>
    </source>
</evidence>
<evidence type="ECO:0000305" key="8"/>
<evidence type="ECO:0007829" key="9">
    <source>
        <dbReference type="PDB" id="3M9E"/>
    </source>
</evidence>
<accession>P18113</accession>
<accession>P37826</accession>
<proteinExistence type="evidence at protein level"/>
<gene>
    <name type="primary">Thrb</name>
    <name type="synonym">Erba2</name>
    <name type="synonym">Nr1a2</name>
</gene>